<protein>
    <recommendedName>
        <fullName evidence="1">Formate--tetrahydrofolate ligase</fullName>
        <ecNumber evidence="1">6.3.4.3</ecNumber>
    </recommendedName>
    <alternativeName>
        <fullName evidence="1">Formyltetrahydrofolate synthetase</fullName>
        <shortName evidence="1">FHS</shortName>
        <shortName evidence="1">FTHFS</shortName>
    </alternativeName>
</protein>
<feature type="chain" id="PRO_1000146704" description="Formate--tetrahydrofolate ligase">
    <location>
        <begin position="1"/>
        <end position="556"/>
    </location>
</feature>
<feature type="binding site" evidence="1">
    <location>
        <begin position="65"/>
        <end position="72"/>
    </location>
    <ligand>
        <name>ATP</name>
        <dbReference type="ChEBI" id="CHEBI:30616"/>
    </ligand>
</feature>
<sequence length="556" mass="59614">MKTDIEIAQSIELKPIVDVVEKLGISYDDLELYGKYKAKLSFDKIRAVESNPVGKLILVTAINPTPAGEGKSTLTIGLADALNKIGKKTMIAIREPSLGPVMGIKGGAAGGGYAQVLPMEDINLHFTGDMHAITTANNALSALIDNHLHQGNELGIDQRRILWKRVVDLNDRALRHVTVGLGGPLNGIPREDGFDITVASEIMAILCLATDIEDLKRRLANIVIGYRYDRTPVSVGDLQVEGALALILKDAIKPNLVQTIYGTPAFVHGGPFANIAHGCNSVLATTTALHLADYTVTEAGFGADLGAEKFLDIKTPNLPTSPDAVVIVATLRALKMNGGVAKDALTEENVEAVRAGFANLKRHVENIRKFGIPAVVAINEFVSDTEAEIAVLKELCASIDVPVELASVWADGAEGGVALAETVVKTIAENPANYKRLYDNDLSVQEKIEKIVTEIYRGSKVNFEKKAQTQIAQIVQNGWDKLPICMAKTQYSFSDNPNALGAPENFEITIRELVPKLGAGFIVALTGDVMTMPGLPKRPAALNMDVESDGTVLGLF</sequence>
<organism>
    <name type="scientific">Streptococcus pneumoniae (strain CGSP14)</name>
    <dbReference type="NCBI Taxonomy" id="516950"/>
    <lineage>
        <taxon>Bacteria</taxon>
        <taxon>Bacillati</taxon>
        <taxon>Bacillota</taxon>
        <taxon>Bacilli</taxon>
        <taxon>Lactobacillales</taxon>
        <taxon>Streptococcaceae</taxon>
        <taxon>Streptococcus</taxon>
    </lineage>
</organism>
<gene>
    <name evidence="1" type="primary">fhs</name>
    <name type="ordered locus">SPCG_1073</name>
</gene>
<reference key="1">
    <citation type="journal article" date="2009" name="BMC Genomics">
        <title>Genome evolution driven by host adaptations results in a more virulent and antimicrobial-resistant Streptococcus pneumoniae serotype 14.</title>
        <authorList>
            <person name="Ding F."/>
            <person name="Tang P."/>
            <person name="Hsu M.-H."/>
            <person name="Cui P."/>
            <person name="Hu S."/>
            <person name="Yu J."/>
            <person name="Chiu C.-H."/>
        </authorList>
    </citation>
    <scope>NUCLEOTIDE SEQUENCE [LARGE SCALE GENOMIC DNA]</scope>
    <source>
        <strain>CGSP14</strain>
    </source>
</reference>
<proteinExistence type="inferred from homology"/>
<dbReference type="EC" id="6.3.4.3" evidence="1"/>
<dbReference type="EMBL" id="CP001033">
    <property type="protein sequence ID" value="ACB90325.1"/>
    <property type="molecule type" value="Genomic_DNA"/>
</dbReference>
<dbReference type="RefSeq" id="WP_000845290.1">
    <property type="nucleotide sequence ID" value="NC_010582.1"/>
</dbReference>
<dbReference type="SMR" id="B2IPQ3"/>
<dbReference type="KEGG" id="spw:SPCG_1073"/>
<dbReference type="HOGENOM" id="CLU_003601_3_3_9"/>
<dbReference type="UniPathway" id="UPA00193"/>
<dbReference type="GO" id="GO:0005524">
    <property type="term" value="F:ATP binding"/>
    <property type="evidence" value="ECO:0007669"/>
    <property type="project" value="UniProtKB-UniRule"/>
</dbReference>
<dbReference type="GO" id="GO:0004329">
    <property type="term" value="F:formate-tetrahydrofolate ligase activity"/>
    <property type="evidence" value="ECO:0007669"/>
    <property type="project" value="UniProtKB-UniRule"/>
</dbReference>
<dbReference type="GO" id="GO:0035999">
    <property type="term" value="P:tetrahydrofolate interconversion"/>
    <property type="evidence" value="ECO:0007669"/>
    <property type="project" value="UniProtKB-UniRule"/>
</dbReference>
<dbReference type="CDD" id="cd00477">
    <property type="entry name" value="FTHFS"/>
    <property type="match status" value="1"/>
</dbReference>
<dbReference type="FunFam" id="3.30.1510.10:FF:000001">
    <property type="entry name" value="Formate--tetrahydrofolate ligase"/>
    <property type="match status" value="1"/>
</dbReference>
<dbReference type="FunFam" id="3.10.410.10:FF:000001">
    <property type="entry name" value="Putative formate--tetrahydrofolate ligase"/>
    <property type="match status" value="1"/>
</dbReference>
<dbReference type="Gene3D" id="3.30.1510.10">
    <property type="entry name" value="Domain 2, N(10)-formyltetrahydrofolate synthetase"/>
    <property type="match status" value="1"/>
</dbReference>
<dbReference type="Gene3D" id="3.10.410.10">
    <property type="entry name" value="Formyltetrahydrofolate synthetase, domain 3"/>
    <property type="match status" value="1"/>
</dbReference>
<dbReference type="Gene3D" id="3.40.50.300">
    <property type="entry name" value="P-loop containing nucleotide triphosphate hydrolases"/>
    <property type="match status" value="1"/>
</dbReference>
<dbReference type="HAMAP" id="MF_01543">
    <property type="entry name" value="FTHFS"/>
    <property type="match status" value="1"/>
</dbReference>
<dbReference type="InterPro" id="IPR000559">
    <property type="entry name" value="Formate_THF_ligase"/>
</dbReference>
<dbReference type="InterPro" id="IPR020628">
    <property type="entry name" value="Formate_THF_ligase_CS"/>
</dbReference>
<dbReference type="InterPro" id="IPR027417">
    <property type="entry name" value="P-loop_NTPase"/>
</dbReference>
<dbReference type="NCBIfam" id="NF010030">
    <property type="entry name" value="PRK13505.1"/>
    <property type="match status" value="1"/>
</dbReference>
<dbReference type="Pfam" id="PF01268">
    <property type="entry name" value="FTHFS"/>
    <property type="match status" value="1"/>
</dbReference>
<dbReference type="SUPFAM" id="SSF52540">
    <property type="entry name" value="P-loop containing nucleoside triphosphate hydrolases"/>
    <property type="match status" value="1"/>
</dbReference>
<dbReference type="PROSITE" id="PS00721">
    <property type="entry name" value="FTHFS_1"/>
    <property type="match status" value="1"/>
</dbReference>
<dbReference type="PROSITE" id="PS00722">
    <property type="entry name" value="FTHFS_2"/>
    <property type="match status" value="1"/>
</dbReference>
<evidence type="ECO:0000255" key="1">
    <source>
        <dbReference type="HAMAP-Rule" id="MF_01543"/>
    </source>
</evidence>
<accession>B2IPQ3</accession>
<comment type="catalytic activity">
    <reaction evidence="1">
        <text>(6S)-5,6,7,8-tetrahydrofolate + formate + ATP = (6R)-10-formyltetrahydrofolate + ADP + phosphate</text>
        <dbReference type="Rhea" id="RHEA:20221"/>
        <dbReference type="ChEBI" id="CHEBI:15740"/>
        <dbReference type="ChEBI" id="CHEBI:30616"/>
        <dbReference type="ChEBI" id="CHEBI:43474"/>
        <dbReference type="ChEBI" id="CHEBI:57453"/>
        <dbReference type="ChEBI" id="CHEBI:195366"/>
        <dbReference type="ChEBI" id="CHEBI:456216"/>
        <dbReference type="EC" id="6.3.4.3"/>
    </reaction>
</comment>
<comment type="pathway">
    <text evidence="1">One-carbon metabolism; tetrahydrofolate interconversion.</text>
</comment>
<comment type="similarity">
    <text evidence="1">Belongs to the formate--tetrahydrofolate ligase family.</text>
</comment>
<name>FTHS_STRPS</name>
<keyword id="KW-0067">ATP-binding</keyword>
<keyword id="KW-0436">Ligase</keyword>
<keyword id="KW-0547">Nucleotide-binding</keyword>
<keyword id="KW-0554">One-carbon metabolism</keyword>